<proteinExistence type="inferred from homology"/>
<comment type="function">
    <text evidence="1">This is one of the proteins that bind and probably mediate the attachment of the 5S RNA into the large ribosomal subunit, where it forms part of the central protuberance. In the 70S ribosome it contacts protein S13 of the 30S subunit (bridge B1b), connecting the 2 subunits; this bridge is implicated in subunit movement. Contacts the P site tRNA; the 5S rRNA and some of its associated proteins might help stabilize positioning of ribosome-bound tRNAs.</text>
</comment>
<comment type="subunit">
    <text evidence="1">Part of the 50S ribosomal subunit; part of the 5S rRNA/L5/L18/L25 subcomplex. Contacts the 5S rRNA and the P site tRNA. Forms a bridge to the 30S subunit in the 70S ribosome.</text>
</comment>
<comment type="similarity">
    <text evidence="1">Belongs to the universal ribosomal protein uL5 family.</text>
</comment>
<organism>
    <name type="scientific">Acidovorax sp. (strain JS42)</name>
    <dbReference type="NCBI Taxonomy" id="232721"/>
    <lineage>
        <taxon>Bacteria</taxon>
        <taxon>Pseudomonadati</taxon>
        <taxon>Pseudomonadota</taxon>
        <taxon>Betaproteobacteria</taxon>
        <taxon>Burkholderiales</taxon>
        <taxon>Comamonadaceae</taxon>
        <taxon>Acidovorax</taxon>
    </lineage>
</organism>
<name>RL5_ACISJ</name>
<sequence length="179" mass="19992">MARLQEIYRDKIAPELVKQFGYTSPMQVPRLTKITLNMGVSEAVADKKIMDNAVADLTKIAGQKPVVTKAKKAIAGFKIREGQAIGCMVTLRGAQMYEFLDRFVTIALPRVRDFRGISGRAFDGRGNYNIGVKEQIIFPEIEYDKVDALRGLNISITTTAKTDEEAKALLTAFRFPFKN</sequence>
<evidence type="ECO:0000255" key="1">
    <source>
        <dbReference type="HAMAP-Rule" id="MF_01333"/>
    </source>
</evidence>
<evidence type="ECO:0000305" key="2"/>
<protein>
    <recommendedName>
        <fullName evidence="1">Large ribosomal subunit protein uL5</fullName>
    </recommendedName>
    <alternativeName>
        <fullName evidence="2">50S ribosomal protein L5</fullName>
    </alternativeName>
</protein>
<accession>A1W320</accession>
<gene>
    <name evidence="1" type="primary">rplE</name>
    <name type="ordered locus">Ajs_0393</name>
</gene>
<dbReference type="EMBL" id="CP000539">
    <property type="protein sequence ID" value="ABM40645.1"/>
    <property type="molecule type" value="Genomic_DNA"/>
</dbReference>
<dbReference type="SMR" id="A1W320"/>
<dbReference type="STRING" id="232721.Ajs_0393"/>
<dbReference type="KEGG" id="ajs:Ajs_0393"/>
<dbReference type="eggNOG" id="COG0094">
    <property type="taxonomic scope" value="Bacteria"/>
</dbReference>
<dbReference type="HOGENOM" id="CLU_061015_2_1_4"/>
<dbReference type="Proteomes" id="UP000000645">
    <property type="component" value="Chromosome"/>
</dbReference>
<dbReference type="GO" id="GO:1990904">
    <property type="term" value="C:ribonucleoprotein complex"/>
    <property type="evidence" value="ECO:0007669"/>
    <property type="project" value="UniProtKB-KW"/>
</dbReference>
<dbReference type="GO" id="GO:0005840">
    <property type="term" value="C:ribosome"/>
    <property type="evidence" value="ECO:0007669"/>
    <property type="project" value="UniProtKB-KW"/>
</dbReference>
<dbReference type="GO" id="GO:0019843">
    <property type="term" value="F:rRNA binding"/>
    <property type="evidence" value="ECO:0007669"/>
    <property type="project" value="UniProtKB-UniRule"/>
</dbReference>
<dbReference type="GO" id="GO:0003735">
    <property type="term" value="F:structural constituent of ribosome"/>
    <property type="evidence" value="ECO:0007669"/>
    <property type="project" value="InterPro"/>
</dbReference>
<dbReference type="GO" id="GO:0000049">
    <property type="term" value="F:tRNA binding"/>
    <property type="evidence" value="ECO:0007669"/>
    <property type="project" value="UniProtKB-UniRule"/>
</dbReference>
<dbReference type="GO" id="GO:0006412">
    <property type="term" value="P:translation"/>
    <property type="evidence" value="ECO:0007669"/>
    <property type="project" value="UniProtKB-UniRule"/>
</dbReference>
<dbReference type="FunFam" id="3.30.1440.10:FF:000001">
    <property type="entry name" value="50S ribosomal protein L5"/>
    <property type="match status" value="1"/>
</dbReference>
<dbReference type="Gene3D" id="3.30.1440.10">
    <property type="match status" value="1"/>
</dbReference>
<dbReference type="HAMAP" id="MF_01333_B">
    <property type="entry name" value="Ribosomal_uL5_B"/>
    <property type="match status" value="1"/>
</dbReference>
<dbReference type="InterPro" id="IPR002132">
    <property type="entry name" value="Ribosomal_uL5"/>
</dbReference>
<dbReference type="InterPro" id="IPR020930">
    <property type="entry name" value="Ribosomal_uL5_bac-type"/>
</dbReference>
<dbReference type="InterPro" id="IPR031309">
    <property type="entry name" value="Ribosomal_uL5_C"/>
</dbReference>
<dbReference type="InterPro" id="IPR020929">
    <property type="entry name" value="Ribosomal_uL5_CS"/>
</dbReference>
<dbReference type="InterPro" id="IPR022803">
    <property type="entry name" value="Ribosomal_uL5_dom_sf"/>
</dbReference>
<dbReference type="InterPro" id="IPR031310">
    <property type="entry name" value="Ribosomal_uL5_N"/>
</dbReference>
<dbReference type="NCBIfam" id="NF000585">
    <property type="entry name" value="PRK00010.1"/>
    <property type="match status" value="1"/>
</dbReference>
<dbReference type="PANTHER" id="PTHR11994">
    <property type="entry name" value="60S RIBOSOMAL PROTEIN L11-RELATED"/>
    <property type="match status" value="1"/>
</dbReference>
<dbReference type="Pfam" id="PF00281">
    <property type="entry name" value="Ribosomal_L5"/>
    <property type="match status" value="1"/>
</dbReference>
<dbReference type="Pfam" id="PF00673">
    <property type="entry name" value="Ribosomal_L5_C"/>
    <property type="match status" value="1"/>
</dbReference>
<dbReference type="PIRSF" id="PIRSF002161">
    <property type="entry name" value="Ribosomal_L5"/>
    <property type="match status" value="1"/>
</dbReference>
<dbReference type="SUPFAM" id="SSF55282">
    <property type="entry name" value="RL5-like"/>
    <property type="match status" value="1"/>
</dbReference>
<dbReference type="PROSITE" id="PS00358">
    <property type="entry name" value="RIBOSOMAL_L5"/>
    <property type="match status" value="1"/>
</dbReference>
<keyword id="KW-0687">Ribonucleoprotein</keyword>
<keyword id="KW-0689">Ribosomal protein</keyword>
<keyword id="KW-0694">RNA-binding</keyword>
<keyword id="KW-0699">rRNA-binding</keyword>
<keyword id="KW-0820">tRNA-binding</keyword>
<reference key="1">
    <citation type="submission" date="2006-12" db="EMBL/GenBank/DDBJ databases">
        <title>Complete sequence of chromosome 1 of Acidovorax sp. JS42.</title>
        <authorList>
            <person name="Copeland A."/>
            <person name="Lucas S."/>
            <person name="Lapidus A."/>
            <person name="Barry K."/>
            <person name="Detter J.C."/>
            <person name="Glavina del Rio T."/>
            <person name="Dalin E."/>
            <person name="Tice H."/>
            <person name="Pitluck S."/>
            <person name="Chertkov O."/>
            <person name="Brettin T."/>
            <person name="Bruce D."/>
            <person name="Han C."/>
            <person name="Tapia R."/>
            <person name="Gilna P."/>
            <person name="Schmutz J."/>
            <person name="Larimer F."/>
            <person name="Land M."/>
            <person name="Hauser L."/>
            <person name="Kyrpides N."/>
            <person name="Kim E."/>
            <person name="Stahl D."/>
            <person name="Richardson P."/>
        </authorList>
    </citation>
    <scope>NUCLEOTIDE SEQUENCE [LARGE SCALE GENOMIC DNA]</scope>
    <source>
        <strain>JS42</strain>
    </source>
</reference>
<feature type="chain" id="PRO_1000052682" description="Large ribosomal subunit protein uL5">
    <location>
        <begin position="1"/>
        <end position="179"/>
    </location>
</feature>